<feature type="chain" id="PRO_0000058937" description="Tumor necrosis factor receptor superfamily member 22">
    <location>
        <begin position="1"/>
        <end position="198"/>
    </location>
</feature>
<feature type="topological domain" description="Cytoplasmic" evidence="1">
    <location>
        <begin position="1"/>
        <end position="20"/>
    </location>
</feature>
<feature type="transmembrane region" description="Helical; Signal-anchor for type II membrane protein" evidence="1">
    <location>
        <begin position="21"/>
        <end position="41"/>
    </location>
</feature>
<feature type="topological domain" description="Extracellular" evidence="1">
    <location>
        <begin position="42"/>
        <end position="198"/>
    </location>
</feature>
<feature type="repeat" description="TNFR-Cys 1">
    <location>
        <begin position="47"/>
        <end position="82"/>
    </location>
</feature>
<feature type="repeat" description="TNFR-Cys 2">
    <location>
        <begin position="84"/>
        <end position="124"/>
    </location>
</feature>
<feature type="repeat" description="TNFR-Cys 3">
    <location>
        <begin position="125"/>
        <end position="165"/>
    </location>
</feature>
<feature type="glycosylation site" description="N-linked (GlcNAc...) asparagine" evidence="1">
    <location>
        <position position="62"/>
    </location>
</feature>
<feature type="glycosylation site" description="N-linked (GlcNAc...) asparagine" evidence="1">
    <location>
        <position position="158"/>
    </location>
</feature>
<feature type="disulfide bond" evidence="2">
    <location>
        <begin position="48"/>
        <end position="59"/>
    </location>
</feature>
<feature type="disulfide bond" evidence="2">
    <location>
        <begin position="60"/>
        <end position="73"/>
    </location>
</feature>
<feature type="disulfide bond" evidence="2">
    <location>
        <begin position="63"/>
        <end position="82"/>
    </location>
</feature>
<feature type="disulfide bond" evidence="2">
    <location>
        <begin position="85"/>
        <end position="100"/>
    </location>
</feature>
<feature type="disulfide bond" evidence="2">
    <location>
        <begin position="103"/>
        <end position="116"/>
    </location>
</feature>
<feature type="disulfide bond" evidence="2">
    <location>
        <begin position="106"/>
        <end position="124"/>
    </location>
</feature>
<feature type="disulfide bond" evidence="2">
    <location>
        <begin position="126"/>
        <end position="141"/>
    </location>
</feature>
<feature type="disulfide bond" evidence="2">
    <location>
        <begin position="144"/>
        <end position="157"/>
    </location>
</feature>
<feature type="disulfide bond" evidence="2">
    <location>
        <begin position="147"/>
        <end position="165"/>
    </location>
</feature>
<feature type="splice variant" id="VSP_007648" description="In isoform 2." evidence="4 5 6">
    <original>NPRNRLFLLLSPLSVLIVSVVVFRIIRR</original>
    <variation>RRSASVAWPI</variation>
    <location>
        <begin position="171"/>
        <end position="198"/>
    </location>
</feature>
<feature type="sequence conflict" description="In Ref. 2; AAL05073." evidence="7" ref="2">
    <original>L</original>
    <variation>V</variation>
    <location>
        <position position="12"/>
    </location>
</feature>
<feature type="sequence conflict" description="In Ref. 1; CAC16406." evidence="7" ref="1">
    <original>L</original>
    <variation>C</variation>
    <location>
        <position position="24"/>
    </location>
</feature>
<feature type="sequence conflict" description="In Ref. 1; CAC16406." evidence="7" ref="1">
    <original>LLLL</original>
    <variation>CVV</variation>
    <location>
        <begin position="27"/>
        <end position="30"/>
    </location>
</feature>
<evidence type="ECO:0000255" key="1"/>
<evidence type="ECO:0000255" key="2">
    <source>
        <dbReference type="PROSITE-ProRule" id="PRU00206"/>
    </source>
</evidence>
<evidence type="ECO:0000269" key="3">
    <source>
    </source>
</evidence>
<evidence type="ECO:0000303" key="4">
    <source>
    </source>
</evidence>
<evidence type="ECO:0000303" key="5">
    <source>
    </source>
</evidence>
<evidence type="ECO:0000303" key="6">
    <source>
    </source>
</evidence>
<evidence type="ECO:0000305" key="7"/>
<reference key="1">
    <citation type="journal article" date="2000" name="Hum. Mol. Genet.">
        <title>Sequence and functional comparison in the Beckwith-Wiedemann region: implications for a novel imprinting centre and extended imprinting.</title>
        <authorList>
            <person name="Engemann S."/>
            <person name="Stroedicke M."/>
            <person name="Paulsen M."/>
            <person name="Franck O."/>
            <person name="Reinhardt R."/>
            <person name="Lane N."/>
            <person name="Reik W."/>
            <person name="Walter J."/>
        </authorList>
    </citation>
    <scope>NUCLEOTIDE SEQUENCE [GENOMIC DNA / MRNA] (ISOFORM 2)</scope>
    <source>
        <strain>129/Sv</strain>
        <tissue>Embryonic stem cell</tissue>
    </source>
</reference>
<reference key="2">
    <citation type="journal article" date="2003" name="J. Biol. Chem.">
        <title>Identification of a new murine tumor necrosis factor receptor locus that contains two novel murine receptors for tumor necrosis factor-related apoptosis-inducing ligand (TRAIL).</title>
        <authorList>
            <person name="Schneider P."/>
            <person name="Olson D."/>
            <person name="Tardivel A."/>
            <person name="Browning B."/>
            <person name="Lugovskoy A."/>
            <person name="Gong D."/>
            <person name="Dobles M."/>
            <person name="Hertig S."/>
            <person name="Hofmann K."/>
            <person name="Van Vlijmen H."/>
            <person name="Hsu Y.-M."/>
            <person name="Burkly L.C."/>
            <person name="Tschopp J."/>
            <person name="Zheng T.S."/>
        </authorList>
    </citation>
    <scope>NUCLEOTIDE SEQUENCE [MRNA] (ISOFORMS 1 AND 2)</scope>
    <scope>FUNCTION</scope>
    <scope>3D-STRUCTURE MODELING OF 62-170</scope>
    <source>
        <strain>NIH Swiss</strain>
    </source>
</reference>
<reference key="3">
    <citation type="submission" date="2001-07" db="EMBL/GenBank/DDBJ databases">
        <title>Characterization of SOBa, a murine member of the TNFR family.</title>
        <authorList>
            <person name="Risser P."/>
            <person name="Mao W."/>
            <person name="Baldwin D.T."/>
            <person name="Pan G."/>
        </authorList>
    </citation>
    <scope>NUCLEOTIDE SEQUENCE (ISOFORM 1)</scope>
</reference>
<reference key="4">
    <citation type="journal article" date="2005" name="Science">
        <title>The transcriptional landscape of the mammalian genome.</title>
        <authorList>
            <person name="Carninci P."/>
            <person name="Kasukawa T."/>
            <person name="Katayama S."/>
            <person name="Gough J."/>
            <person name="Frith M.C."/>
            <person name="Maeda N."/>
            <person name="Oyama R."/>
            <person name="Ravasi T."/>
            <person name="Lenhard B."/>
            <person name="Wells C."/>
            <person name="Kodzius R."/>
            <person name="Shimokawa K."/>
            <person name="Bajic V.B."/>
            <person name="Brenner S.E."/>
            <person name="Batalov S."/>
            <person name="Forrest A.R."/>
            <person name="Zavolan M."/>
            <person name="Davis M.J."/>
            <person name="Wilming L.G."/>
            <person name="Aidinis V."/>
            <person name="Allen J.E."/>
            <person name="Ambesi-Impiombato A."/>
            <person name="Apweiler R."/>
            <person name="Aturaliya R.N."/>
            <person name="Bailey T.L."/>
            <person name="Bansal M."/>
            <person name="Baxter L."/>
            <person name="Beisel K.W."/>
            <person name="Bersano T."/>
            <person name="Bono H."/>
            <person name="Chalk A.M."/>
            <person name="Chiu K.P."/>
            <person name="Choudhary V."/>
            <person name="Christoffels A."/>
            <person name="Clutterbuck D.R."/>
            <person name="Crowe M.L."/>
            <person name="Dalla E."/>
            <person name="Dalrymple B.P."/>
            <person name="de Bono B."/>
            <person name="Della Gatta G."/>
            <person name="di Bernardo D."/>
            <person name="Down T."/>
            <person name="Engstrom P."/>
            <person name="Fagiolini M."/>
            <person name="Faulkner G."/>
            <person name="Fletcher C.F."/>
            <person name="Fukushima T."/>
            <person name="Furuno M."/>
            <person name="Futaki S."/>
            <person name="Gariboldi M."/>
            <person name="Georgii-Hemming P."/>
            <person name="Gingeras T.R."/>
            <person name="Gojobori T."/>
            <person name="Green R.E."/>
            <person name="Gustincich S."/>
            <person name="Harbers M."/>
            <person name="Hayashi Y."/>
            <person name="Hensch T.K."/>
            <person name="Hirokawa N."/>
            <person name="Hill D."/>
            <person name="Huminiecki L."/>
            <person name="Iacono M."/>
            <person name="Ikeo K."/>
            <person name="Iwama A."/>
            <person name="Ishikawa T."/>
            <person name="Jakt M."/>
            <person name="Kanapin A."/>
            <person name="Katoh M."/>
            <person name="Kawasawa Y."/>
            <person name="Kelso J."/>
            <person name="Kitamura H."/>
            <person name="Kitano H."/>
            <person name="Kollias G."/>
            <person name="Krishnan S.P."/>
            <person name="Kruger A."/>
            <person name="Kummerfeld S.K."/>
            <person name="Kurochkin I.V."/>
            <person name="Lareau L.F."/>
            <person name="Lazarevic D."/>
            <person name="Lipovich L."/>
            <person name="Liu J."/>
            <person name="Liuni S."/>
            <person name="McWilliam S."/>
            <person name="Madan Babu M."/>
            <person name="Madera M."/>
            <person name="Marchionni L."/>
            <person name="Matsuda H."/>
            <person name="Matsuzawa S."/>
            <person name="Miki H."/>
            <person name="Mignone F."/>
            <person name="Miyake S."/>
            <person name="Morris K."/>
            <person name="Mottagui-Tabar S."/>
            <person name="Mulder N."/>
            <person name="Nakano N."/>
            <person name="Nakauchi H."/>
            <person name="Ng P."/>
            <person name="Nilsson R."/>
            <person name="Nishiguchi S."/>
            <person name="Nishikawa S."/>
            <person name="Nori F."/>
            <person name="Ohara O."/>
            <person name="Okazaki Y."/>
            <person name="Orlando V."/>
            <person name="Pang K.C."/>
            <person name="Pavan W.J."/>
            <person name="Pavesi G."/>
            <person name="Pesole G."/>
            <person name="Petrovsky N."/>
            <person name="Piazza S."/>
            <person name="Reed J."/>
            <person name="Reid J.F."/>
            <person name="Ring B.Z."/>
            <person name="Ringwald M."/>
            <person name="Rost B."/>
            <person name="Ruan Y."/>
            <person name="Salzberg S.L."/>
            <person name="Sandelin A."/>
            <person name="Schneider C."/>
            <person name="Schoenbach C."/>
            <person name="Sekiguchi K."/>
            <person name="Semple C.A."/>
            <person name="Seno S."/>
            <person name="Sessa L."/>
            <person name="Sheng Y."/>
            <person name="Shibata Y."/>
            <person name="Shimada H."/>
            <person name="Shimada K."/>
            <person name="Silva D."/>
            <person name="Sinclair B."/>
            <person name="Sperling S."/>
            <person name="Stupka E."/>
            <person name="Sugiura K."/>
            <person name="Sultana R."/>
            <person name="Takenaka Y."/>
            <person name="Taki K."/>
            <person name="Tammoja K."/>
            <person name="Tan S.L."/>
            <person name="Tang S."/>
            <person name="Taylor M.S."/>
            <person name="Tegner J."/>
            <person name="Teichmann S.A."/>
            <person name="Ueda H.R."/>
            <person name="van Nimwegen E."/>
            <person name="Verardo R."/>
            <person name="Wei C.L."/>
            <person name="Yagi K."/>
            <person name="Yamanishi H."/>
            <person name="Zabarovsky E."/>
            <person name="Zhu S."/>
            <person name="Zimmer A."/>
            <person name="Hide W."/>
            <person name="Bult C."/>
            <person name="Grimmond S.M."/>
            <person name="Teasdale R.D."/>
            <person name="Liu E.T."/>
            <person name="Brusic V."/>
            <person name="Quackenbush J."/>
            <person name="Wahlestedt C."/>
            <person name="Mattick J.S."/>
            <person name="Hume D.A."/>
            <person name="Kai C."/>
            <person name="Sasaki D."/>
            <person name="Tomaru Y."/>
            <person name="Fukuda S."/>
            <person name="Kanamori-Katayama M."/>
            <person name="Suzuki M."/>
            <person name="Aoki J."/>
            <person name="Arakawa T."/>
            <person name="Iida J."/>
            <person name="Imamura K."/>
            <person name="Itoh M."/>
            <person name="Kato T."/>
            <person name="Kawaji H."/>
            <person name="Kawagashira N."/>
            <person name="Kawashima T."/>
            <person name="Kojima M."/>
            <person name="Kondo S."/>
            <person name="Konno H."/>
            <person name="Nakano K."/>
            <person name="Ninomiya N."/>
            <person name="Nishio T."/>
            <person name="Okada M."/>
            <person name="Plessy C."/>
            <person name="Shibata K."/>
            <person name="Shiraki T."/>
            <person name="Suzuki S."/>
            <person name="Tagami M."/>
            <person name="Waki K."/>
            <person name="Watahiki A."/>
            <person name="Okamura-Oho Y."/>
            <person name="Suzuki H."/>
            <person name="Kawai J."/>
            <person name="Hayashizaki Y."/>
        </authorList>
    </citation>
    <scope>NUCLEOTIDE SEQUENCE [LARGE SCALE MRNA] (ISOFORM 2)</scope>
    <source>
        <strain>C57BL/6J</strain>
        <tissue>Embryo</tissue>
    </source>
</reference>
<gene>
    <name type="primary">Tnfrsf22</name>
    <name type="synonym">Dctrailr2</name>
    <name type="synonym">Tnfrh2</name>
    <name type="synonym">Tnfrsf1al2</name>
</gene>
<comment type="function">
    <text evidence="3">Receptor for the cytotoxic ligand TNFSF10/TRAIL. Lacks a cytoplasmic death domain and hence is not capable of inducing apoptosis. Protects cells against TRAIL mediated apoptosis possibly through ligand competition. Cannot induce the NF-kappa-B pathway.</text>
</comment>
<comment type="subcellular location">
    <molecule>Isoform 1</molecule>
    <subcellularLocation>
        <location evidence="7">Cell membrane</location>
        <topology evidence="7">Single-pass type II membrane protein</topology>
    </subcellularLocation>
</comment>
<comment type="subcellular location">
    <molecule>Isoform 2</molecule>
    <subcellularLocation>
        <location evidence="7">Secreted</location>
    </subcellularLocation>
</comment>
<comment type="alternative products">
    <event type="alternative splicing"/>
    <isoform>
        <id>Q9ER62-1</id>
        <name>1</name>
        <sequence type="displayed"/>
    </isoform>
    <isoform>
        <id>Q9ER62-2</id>
        <name>2</name>
        <sequence type="described" ref="VSP_007648"/>
    </isoform>
</comment>
<comment type="tissue specificity">
    <text>Ubiquitous.</text>
</comment>
<comment type="sequence caution" evidence="7">
    <conflict type="erroneous initiation">
        <sequence resource="EMBL-CDS" id="BAB28502"/>
    </conflict>
</comment>
<comment type="sequence caution" evidence="7">
    <conflict type="frameshift">
        <sequence resource="EMBL-CDS" id="CAC16406"/>
    </conflict>
</comment>
<comment type="sequence caution" evidence="7">
    <conflict type="erroneous gene model prediction">
        <sequence resource="EMBL-CDS" id="CAC27353"/>
    </conflict>
</comment>
<sequence length="198" mass="22375">MFGFFCSLVSSLSRWFLWRRLLLLLLLLLLNLPLQVKFAMLELHSFKCPAGEYWSKDVCCKNCSAGTFVKAPCEIPHTQGQCEKCHPGTFTEKDNYLDACILCSTCDKDQEMVADCSATSDRKCQCRTGLYYYDPKFPESCRPCTKCPQGIPVLQECNSTANTVCSSSVSNPRNRLFLLLSPLSVLIVSVVVFRIIRR</sequence>
<proteinExistence type="evidence at transcript level"/>
<keyword id="KW-0025">Alternative splicing</keyword>
<keyword id="KW-1003">Cell membrane</keyword>
<keyword id="KW-1015">Disulfide bond</keyword>
<keyword id="KW-0325">Glycoprotein</keyword>
<keyword id="KW-0472">Membrane</keyword>
<keyword id="KW-0675">Receptor</keyword>
<keyword id="KW-1185">Reference proteome</keyword>
<keyword id="KW-0677">Repeat</keyword>
<keyword id="KW-0964">Secreted</keyword>
<keyword id="KW-0735">Signal-anchor</keyword>
<keyword id="KW-0812">Transmembrane</keyword>
<keyword id="KW-1133">Transmembrane helix</keyword>
<protein>
    <recommendedName>
        <fullName>Tumor necrosis factor receptor superfamily member 22</fullName>
    </recommendedName>
    <alternativeName>
        <fullName>Decoy TRAIL receptor 2</fullName>
    </alternativeName>
    <alternativeName>
        <fullName>TNF receptor family member SOBa</fullName>
    </alternativeName>
    <alternativeName>
        <fullName>TNF receptor homolog 2</fullName>
    </alternativeName>
    <alternativeName>
        <fullName>Tumor necrosis factor receptor p60 homolog 2</fullName>
    </alternativeName>
</protein>
<organism>
    <name type="scientific">Mus musculus</name>
    <name type="common">Mouse</name>
    <dbReference type="NCBI Taxonomy" id="10090"/>
    <lineage>
        <taxon>Eukaryota</taxon>
        <taxon>Metazoa</taxon>
        <taxon>Chordata</taxon>
        <taxon>Craniata</taxon>
        <taxon>Vertebrata</taxon>
        <taxon>Euteleostomi</taxon>
        <taxon>Mammalia</taxon>
        <taxon>Eutheria</taxon>
        <taxon>Euarchontoglires</taxon>
        <taxon>Glires</taxon>
        <taxon>Rodentia</taxon>
        <taxon>Myomorpha</taxon>
        <taxon>Muroidea</taxon>
        <taxon>Muridae</taxon>
        <taxon>Murinae</taxon>
        <taxon>Mus</taxon>
        <taxon>Mus</taxon>
    </lineage>
</organism>
<dbReference type="EMBL" id="AJ278265">
    <property type="protein sequence ID" value="CAC16406.1"/>
    <property type="status" value="ALT_FRAME"/>
    <property type="molecule type" value="mRNA"/>
</dbReference>
<dbReference type="EMBL" id="AJ276505">
    <property type="protein sequence ID" value="CAC27353.1"/>
    <property type="status" value="ALT_SEQ"/>
    <property type="molecule type" value="Genomic_DNA"/>
</dbReference>
<dbReference type="EMBL" id="AY165626">
    <property type="protein sequence ID" value="AAN87806.1"/>
    <property type="molecule type" value="mRNA"/>
</dbReference>
<dbReference type="EMBL" id="AY165627">
    <property type="protein sequence ID" value="AAN87807.1"/>
    <property type="molecule type" value="mRNA"/>
</dbReference>
<dbReference type="EMBL" id="AY046551">
    <property type="protein sequence ID" value="AAL05073.1"/>
    <property type="molecule type" value="mRNA"/>
</dbReference>
<dbReference type="EMBL" id="AK012838">
    <property type="protein sequence ID" value="BAB28502.2"/>
    <property type="status" value="ALT_INIT"/>
    <property type="molecule type" value="mRNA"/>
</dbReference>
<dbReference type="CCDS" id="CCDS22043.1">
    <molecule id="Q9ER62-2"/>
</dbReference>
<dbReference type="CCDS" id="CCDS80846.1">
    <molecule id="Q9ER62-1"/>
</dbReference>
<dbReference type="RefSeq" id="NP_001298074.1">
    <molecule id="Q9ER62-1"/>
    <property type="nucleotide sequence ID" value="NM_001311145.2"/>
</dbReference>
<dbReference type="RefSeq" id="NP_076169.2">
    <molecule id="Q9ER62-2"/>
    <property type="nucleotide sequence ID" value="NM_023680.5"/>
</dbReference>
<dbReference type="SMR" id="Q9ER62"/>
<dbReference type="FunCoup" id="Q9ER62">
    <property type="interactions" value="10"/>
</dbReference>
<dbReference type="STRING" id="10090.ENSMUSP00000075018"/>
<dbReference type="GlyCosmos" id="Q9ER62">
    <property type="glycosylation" value="2 sites, No reported glycans"/>
</dbReference>
<dbReference type="GlyGen" id="Q9ER62">
    <property type="glycosylation" value="2 sites, 1 N-linked glycan (1 site)"/>
</dbReference>
<dbReference type="PaxDb" id="10090-ENSMUSP00000075018"/>
<dbReference type="ProteomicsDB" id="259481">
    <molecule id="Q9ER62-1"/>
</dbReference>
<dbReference type="ProteomicsDB" id="259482">
    <molecule id="Q9ER62-2"/>
</dbReference>
<dbReference type="DNASU" id="79202"/>
<dbReference type="Ensembl" id="ENSMUST00000075588.13">
    <molecule id="Q9ER62-1"/>
    <property type="protein sequence ID" value="ENSMUSP00000075018.7"/>
    <property type="gene ID" value="ENSMUSG00000010751.16"/>
</dbReference>
<dbReference type="Ensembl" id="ENSMUST00000084396.4">
    <molecule id="Q9ER62-2"/>
    <property type="protein sequence ID" value="ENSMUSP00000081432.4"/>
    <property type="gene ID" value="ENSMUSG00000010751.16"/>
</dbReference>
<dbReference type="Ensembl" id="ENSMUST00000146692.8">
    <molecule id="Q9ER62-2"/>
    <property type="protein sequence ID" value="ENSMUSP00000119297.2"/>
    <property type="gene ID" value="ENSMUSG00000010751.16"/>
</dbReference>
<dbReference type="GeneID" id="79202"/>
<dbReference type="KEGG" id="mmu:79202"/>
<dbReference type="UCSC" id="uc009kps.1">
    <molecule id="Q9ER62-2"/>
    <property type="organism name" value="mouse"/>
</dbReference>
<dbReference type="UCSC" id="uc009kpt.1">
    <molecule id="Q9ER62-1"/>
    <property type="organism name" value="mouse"/>
</dbReference>
<dbReference type="AGR" id="MGI:1930270"/>
<dbReference type="CTD" id="79202"/>
<dbReference type="MGI" id="MGI:1930270">
    <property type="gene designation" value="Tnfrsf22"/>
</dbReference>
<dbReference type="VEuPathDB" id="HostDB:ENSMUSG00000010751"/>
<dbReference type="eggNOG" id="ENOG502RBEC">
    <property type="taxonomic scope" value="Eukaryota"/>
</dbReference>
<dbReference type="GeneTree" id="ENSGT00930000151070"/>
<dbReference type="HOGENOM" id="CLU_130470_0_0_1"/>
<dbReference type="InParanoid" id="Q9ER62"/>
<dbReference type="OMA" id="ICESASM"/>
<dbReference type="OrthoDB" id="8848202at2759"/>
<dbReference type="PhylomeDB" id="Q9ER62"/>
<dbReference type="TreeFam" id="TF333916"/>
<dbReference type="BioGRID-ORCS" id="79202">
    <property type="hits" value="2 hits in 75 CRISPR screens"/>
</dbReference>
<dbReference type="ChiTaRS" id="Tnfrsf22">
    <property type="organism name" value="mouse"/>
</dbReference>
<dbReference type="PRO" id="PR:Q9ER62"/>
<dbReference type="Proteomes" id="UP000000589">
    <property type="component" value="Chromosome 7"/>
</dbReference>
<dbReference type="RNAct" id="Q9ER62">
    <property type="molecule type" value="protein"/>
</dbReference>
<dbReference type="Bgee" id="ENSMUSG00000010751">
    <property type="expression patterns" value="Expressed in embryonic post-anal tail and 85 other cell types or tissues"/>
</dbReference>
<dbReference type="ExpressionAtlas" id="Q9ER62">
    <property type="expression patterns" value="baseline and differential"/>
</dbReference>
<dbReference type="GO" id="GO:0009897">
    <property type="term" value="C:external side of plasma membrane"/>
    <property type="evidence" value="ECO:0000314"/>
    <property type="project" value="MGI"/>
</dbReference>
<dbReference type="GO" id="GO:0005576">
    <property type="term" value="C:extracellular region"/>
    <property type="evidence" value="ECO:0007669"/>
    <property type="project" value="UniProtKB-SubCell"/>
</dbReference>
<dbReference type="GO" id="GO:0045569">
    <property type="term" value="F:TRAIL binding"/>
    <property type="evidence" value="ECO:0000314"/>
    <property type="project" value="UniProtKB"/>
</dbReference>
<dbReference type="GO" id="GO:1902042">
    <property type="term" value="P:negative regulation of extrinsic apoptotic signaling pathway via death domain receptors"/>
    <property type="evidence" value="ECO:0000314"/>
    <property type="project" value="MGI"/>
</dbReference>
<dbReference type="CDD" id="cd15837">
    <property type="entry name" value="TNFRSF26"/>
    <property type="match status" value="1"/>
</dbReference>
<dbReference type="FunFam" id="2.10.50.10:FF:000087">
    <property type="entry name" value="Tumor necrosis factor receptor superfamily member 23"/>
    <property type="match status" value="1"/>
</dbReference>
<dbReference type="Gene3D" id="2.10.50.10">
    <property type="entry name" value="Tumor Necrosis Factor Receptor, subunit A, domain 2"/>
    <property type="match status" value="3"/>
</dbReference>
<dbReference type="InterPro" id="IPR001368">
    <property type="entry name" value="TNFR/NGFR_Cys_rich_reg"/>
</dbReference>
<dbReference type="InterPro" id="IPR052491">
    <property type="entry name" value="TNFRSF10"/>
</dbReference>
<dbReference type="InterPro" id="IPR034062">
    <property type="entry name" value="TNFRSF26_N"/>
</dbReference>
<dbReference type="PANTHER" id="PTHR46330">
    <property type="entry name" value="TUMOR NECROSIS FACTOR RECEPTOR SUPERFAMILY MEMBER 10B"/>
    <property type="match status" value="1"/>
</dbReference>
<dbReference type="PANTHER" id="PTHR46330:SF16">
    <property type="entry name" value="TUMOR NECROSIS FACTOR RECEPTOR SUPERFAMILY MEMBER 22"/>
    <property type="match status" value="1"/>
</dbReference>
<dbReference type="Pfam" id="PF00020">
    <property type="entry name" value="TNFR_c6"/>
    <property type="match status" value="2"/>
</dbReference>
<dbReference type="SMART" id="SM00208">
    <property type="entry name" value="TNFR"/>
    <property type="match status" value="3"/>
</dbReference>
<dbReference type="SUPFAM" id="SSF57586">
    <property type="entry name" value="TNF receptor-like"/>
    <property type="match status" value="2"/>
</dbReference>
<dbReference type="PROSITE" id="PS00652">
    <property type="entry name" value="TNFR_NGFR_1"/>
    <property type="match status" value="3"/>
</dbReference>
<dbReference type="PROSITE" id="PS50050">
    <property type="entry name" value="TNFR_NGFR_2"/>
    <property type="match status" value="2"/>
</dbReference>
<name>TNR22_MOUSE</name>
<accession>Q9ER62</accession>
<accession>Q8VHB9</accession>
<accession>Q9CZA4</accession>